<reference key="1">
    <citation type="journal article" date="2006" name="BMC Evol. Biol.">
        <title>Phylogenetic analyses of Vitis (Vitaceae) based on complete chloroplast genome sequences: effects of taxon sampling and phylogenetic methods on resolving relationships among rosids.</title>
        <authorList>
            <person name="Jansen R.K."/>
            <person name="Kaittanis C."/>
            <person name="Lee S.-B."/>
            <person name="Saski C."/>
            <person name="Tomkins J."/>
            <person name="Alverson A.J."/>
            <person name="Daniell H."/>
        </authorList>
    </citation>
    <scope>NUCLEOTIDE SEQUENCE [LARGE SCALE GENOMIC DNA]</scope>
    <source>
        <strain>cv. Maxxa</strain>
    </source>
</reference>
<proteinExistence type="inferred from homology"/>
<sequence length="473" mass="51840">MKTLYSLRRFYPVETLFNGTLALAGRDQETTGFAWWAGNARLINLSGKLLGAHVAHAGLIVFWAGAMNLFEVAHFVPEKPMYEQGLILLPHLATLGWGVGPGGEVIDTFPYFVSGVLHLISSAVLGFGGIYHALLGPETLEESFPFFGYVWKDRNKMTTILGIHLILLGIGAFLLVFKALYFGGVYDTWAPGGGDVRKITNLTLSPSVIFGYLLKSPFGGEGWIVSVDDLEDIIGGHVWLGSICIFGGIWHILTKPFAWARRALVWSGEAYLSYSLGALAVFGFIACCFVWFNNTAYPSEFYGPTGPEASQAQAFTFLVRDQRLGANVGSAQGPTGLGKYLMRSPTGEVIFGGETMRFWDLRAPWLEPLRGPNGLDLSRLKKDIQPWQERRSAEYMTHAPLGSLNSVGGVATEINAVNYVSPRSWLATSHFVLGFFLFVGHLWHAGRARAAAAGFEKGIDRDFEPVLSMTPLN</sequence>
<name>PSBC_VITVI</name>
<accession>Q0ZJ24</accession>
<geneLocation type="chloroplast"/>
<feature type="propeptide" id="PRO_0000431216" evidence="1">
    <location>
        <begin position="1"/>
        <end position="14"/>
    </location>
</feature>
<feature type="chain" id="PRO_0000361507" description="Photosystem II CP43 reaction center protein" evidence="1">
    <location>
        <begin position="15"/>
        <end position="473"/>
    </location>
</feature>
<feature type="transmembrane region" description="Helical" evidence="1">
    <location>
        <begin position="69"/>
        <end position="93"/>
    </location>
</feature>
<feature type="transmembrane region" description="Helical" evidence="1">
    <location>
        <begin position="134"/>
        <end position="155"/>
    </location>
</feature>
<feature type="transmembrane region" description="Helical" evidence="1">
    <location>
        <begin position="178"/>
        <end position="200"/>
    </location>
</feature>
<feature type="transmembrane region" description="Helical" evidence="1">
    <location>
        <begin position="255"/>
        <end position="275"/>
    </location>
</feature>
<feature type="transmembrane region" description="Helical" evidence="1">
    <location>
        <begin position="291"/>
        <end position="312"/>
    </location>
</feature>
<feature type="transmembrane region" description="Helical" evidence="1">
    <location>
        <begin position="447"/>
        <end position="471"/>
    </location>
</feature>
<feature type="binding site" evidence="1">
    <location>
        <position position="367"/>
    </location>
    <ligand>
        <name>[CaMn4O5] cluster</name>
        <dbReference type="ChEBI" id="CHEBI:189552"/>
    </ligand>
</feature>
<feature type="modified residue" description="N-acetylthreonine" evidence="1">
    <location>
        <position position="15"/>
    </location>
</feature>
<feature type="modified residue" description="Phosphothreonine" evidence="1">
    <location>
        <position position="15"/>
    </location>
</feature>
<organism>
    <name type="scientific">Vitis vinifera</name>
    <name type="common">Grape</name>
    <dbReference type="NCBI Taxonomy" id="29760"/>
    <lineage>
        <taxon>Eukaryota</taxon>
        <taxon>Viridiplantae</taxon>
        <taxon>Streptophyta</taxon>
        <taxon>Embryophyta</taxon>
        <taxon>Tracheophyta</taxon>
        <taxon>Spermatophyta</taxon>
        <taxon>Magnoliopsida</taxon>
        <taxon>eudicotyledons</taxon>
        <taxon>Gunneridae</taxon>
        <taxon>Pentapetalae</taxon>
        <taxon>rosids</taxon>
        <taxon>Vitales</taxon>
        <taxon>Vitaceae</taxon>
        <taxon>Viteae</taxon>
        <taxon>Vitis</taxon>
    </lineage>
</organism>
<protein>
    <recommendedName>
        <fullName evidence="1">Photosystem II CP43 reaction center protein</fullName>
    </recommendedName>
    <alternativeName>
        <fullName evidence="1">PSII 43 kDa protein</fullName>
    </alternativeName>
    <alternativeName>
        <fullName evidence="1">Protein CP-43</fullName>
    </alternativeName>
</protein>
<evidence type="ECO:0000255" key="1">
    <source>
        <dbReference type="HAMAP-Rule" id="MF_01496"/>
    </source>
</evidence>
<dbReference type="EMBL" id="DQ424856">
    <property type="protein sequence ID" value="ABE47530.1"/>
    <property type="molecule type" value="Genomic_DNA"/>
</dbReference>
<dbReference type="RefSeq" id="YP_567072.1">
    <property type="nucleotide sequence ID" value="NC_007957.1"/>
</dbReference>
<dbReference type="SMR" id="Q0ZJ24"/>
<dbReference type="FunCoup" id="Q0ZJ24">
    <property type="interactions" value="353"/>
</dbReference>
<dbReference type="STRING" id="29760.Q0ZJ24"/>
<dbReference type="PaxDb" id="29760-VIT_00s0396g00010.t01"/>
<dbReference type="GeneID" id="4025084"/>
<dbReference type="KEGG" id="vvi:4025084"/>
<dbReference type="eggNOG" id="ENOG502QR3X">
    <property type="taxonomic scope" value="Eukaryota"/>
</dbReference>
<dbReference type="InParanoid" id="Q0ZJ24"/>
<dbReference type="OrthoDB" id="898666at71240"/>
<dbReference type="Proteomes" id="UP000009183">
    <property type="component" value="Chloroplast"/>
</dbReference>
<dbReference type="ExpressionAtlas" id="Q0ZJ24">
    <property type="expression patterns" value="baseline and differential"/>
</dbReference>
<dbReference type="GO" id="GO:0009535">
    <property type="term" value="C:chloroplast thylakoid membrane"/>
    <property type="evidence" value="ECO:0007669"/>
    <property type="project" value="UniProtKB-SubCell"/>
</dbReference>
<dbReference type="GO" id="GO:0009523">
    <property type="term" value="C:photosystem II"/>
    <property type="evidence" value="ECO:0007669"/>
    <property type="project" value="UniProtKB-KW"/>
</dbReference>
<dbReference type="GO" id="GO:0016168">
    <property type="term" value="F:chlorophyll binding"/>
    <property type="evidence" value="ECO:0007669"/>
    <property type="project" value="UniProtKB-UniRule"/>
</dbReference>
<dbReference type="GO" id="GO:0045156">
    <property type="term" value="F:electron transporter, transferring electrons within the cyclic electron transport pathway of photosynthesis activity"/>
    <property type="evidence" value="ECO:0007669"/>
    <property type="project" value="InterPro"/>
</dbReference>
<dbReference type="GO" id="GO:0046872">
    <property type="term" value="F:metal ion binding"/>
    <property type="evidence" value="ECO:0007669"/>
    <property type="project" value="UniProtKB-KW"/>
</dbReference>
<dbReference type="GO" id="GO:0009772">
    <property type="term" value="P:photosynthetic electron transport in photosystem II"/>
    <property type="evidence" value="ECO:0007669"/>
    <property type="project" value="InterPro"/>
</dbReference>
<dbReference type="FunFam" id="1.10.10.670:FF:000001">
    <property type="entry name" value="Photosystem II CP43 reaction center protein"/>
    <property type="match status" value="1"/>
</dbReference>
<dbReference type="Gene3D" id="1.10.10.670">
    <property type="entry name" value="photosystem ii from thermosynechococcus elongatus"/>
    <property type="match status" value="1"/>
</dbReference>
<dbReference type="HAMAP" id="MF_01496">
    <property type="entry name" value="PSII_PsbC_CP43"/>
    <property type="match status" value="1"/>
</dbReference>
<dbReference type="InterPro" id="IPR000932">
    <property type="entry name" value="PS_antenna-like"/>
</dbReference>
<dbReference type="InterPro" id="IPR036001">
    <property type="entry name" value="PS_II_antenna-like_sf"/>
</dbReference>
<dbReference type="InterPro" id="IPR005869">
    <property type="entry name" value="PSII_PsbC"/>
</dbReference>
<dbReference type="InterPro" id="IPR044900">
    <property type="entry name" value="PSII_PsbC_sf"/>
</dbReference>
<dbReference type="NCBIfam" id="TIGR01153">
    <property type="entry name" value="psbC"/>
    <property type="match status" value="1"/>
</dbReference>
<dbReference type="Pfam" id="PF00421">
    <property type="entry name" value="PSII"/>
    <property type="match status" value="1"/>
</dbReference>
<dbReference type="SUPFAM" id="SSF161077">
    <property type="entry name" value="Photosystem II antenna protein-like"/>
    <property type="match status" value="1"/>
</dbReference>
<keyword id="KW-0007">Acetylation</keyword>
<keyword id="KW-0148">Chlorophyll</keyword>
<keyword id="KW-0150">Chloroplast</keyword>
<keyword id="KW-0157">Chromophore</keyword>
<keyword id="KW-0464">Manganese</keyword>
<keyword id="KW-0472">Membrane</keyword>
<keyword id="KW-0479">Metal-binding</keyword>
<keyword id="KW-0597">Phosphoprotein</keyword>
<keyword id="KW-0602">Photosynthesis</keyword>
<keyword id="KW-0604">Photosystem II</keyword>
<keyword id="KW-0934">Plastid</keyword>
<keyword id="KW-1185">Reference proteome</keyword>
<keyword id="KW-0793">Thylakoid</keyword>
<keyword id="KW-0812">Transmembrane</keyword>
<keyword id="KW-1133">Transmembrane helix</keyword>
<comment type="function">
    <text evidence="1">One of the components of the core complex of photosystem II (PSII). It binds chlorophyll and helps catalyze the primary light-induced photochemical processes of PSII. PSII is a light-driven water:plastoquinone oxidoreductase, using light energy to abstract electrons from H(2)O, generating O(2) and a proton gradient subsequently used for ATP formation.</text>
</comment>
<comment type="cofactor">
    <text evidence="1">Binds multiple chlorophylls and provides some of the ligands for the Ca-4Mn-5O cluster of the oxygen-evolving complex. It may also provide a ligand for a Cl- that is required for oxygen evolution. PSII binds additional chlorophylls, carotenoids and specific lipids.</text>
</comment>
<comment type="subunit">
    <text evidence="1">PSII is composed of 1 copy each of membrane proteins PsbA, PsbB, PsbC, PsbD, PsbE, PsbF, PsbH, PsbI, PsbJ, PsbK, PsbL, PsbM, PsbT, PsbX, PsbY, PsbZ, Psb30/Ycf12, at least 3 peripheral proteins of the oxygen-evolving complex and a large number of cofactors. It forms dimeric complexes.</text>
</comment>
<comment type="subcellular location">
    <subcellularLocation>
        <location evidence="1">Plastid</location>
        <location evidence="1">Chloroplast thylakoid membrane</location>
        <topology evidence="1">Multi-pass membrane protein</topology>
    </subcellularLocation>
</comment>
<comment type="similarity">
    <text evidence="1">Belongs to the PsbB/PsbC family. PsbC subfamily.</text>
</comment>
<gene>
    <name evidence="1" type="primary">psbC</name>
</gene>